<name>KDPC_PSE14</name>
<comment type="function">
    <text evidence="1">Part of the high-affinity ATP-driven potassium transport (or Kdp) system, which catalyzes the hydrolysis of ATP coupled with the electrogenic transport of potassium into the cytoplasm. This subunit acts as a catalytic chaperone that increases the ATP-binding affinity of the ATP-hydrolyzing subunit KdpB by the formation of a transient KdpB/KdpC/ATP ternary complex.</text>
</comment>
<comment type="subunit">
    <text evidence="1">The system is composed of three essential subunits: KdpA, KdpB and KdpC.</text>
</comment>
<comment type="subcellular location">
    <subcellularLocation>
        <location evidence="1">Cell inner membrane</location>
        <topology evidence="1">Single-pass membrane protein</topology>
    </subcellularLocation>
</comment>
<comment type="similarity">
    <text evidence="1">Belongs to the KdpC family.</text>
</comment>
<reference key="1">
    <citation type="journal article" date="2005" name="J. Bacteriol.">
        <title>Whole-genome sequence analysis of Pseudomonas syringae pv. phaseolicola 1448A reveals divergence among pathovars in genes involved in virulence and transposition.</title>
        <authorList>
            <person name="Joardar V."/>
            <person name="Lindeberg M."/>
            <person name="Jackson R.W."/>
            <person name="Selengut J."/>
            <person name="Dodson R."/>
            <person name="Brinkac L.M."/>
            <person name="Daugherty S.C."/>
            <person name="DeBoy R.T."/>
            <person name="Durkin A.S."/>
            <person name="Gwinn Giglio M."/>
            <person name="Madupu R."/>
            <person name="Nelson W.C."/>
            <person name="Rosovitz M.J."/>
            <person name="Sullivan S.A."/>
            <person name="Crabtree J."/>
            <person name="Creasy T."/>
            <person name="Davidsen T.M."/>
            <person name="Haft D.H."/>
            <person name="Zafar N."/>
            <person name="Zhou L."/>
            <person name="Halpin R."/>
            <person name="Holley T."/>
            <person name="Khouri H.M."/>
            <person name="Feldblyum T.V."/>
            <person name="White O."/>
            <person name="Fraser C.M."/>
            <person name="Chatterjee A.K."/>
            <person name="Cartinhour S."/>
            <person name="Schneider D."/>
            <person name="Mansfield J.W."/>
            <person name="Collmer A."/>
            <person name="Buell R."/>
        </authorList>
    </citation>
    <scope>NUCLEOTIDE SEQUENCE [LARGE SCALE GENOMIC DNA]</scope>
    <source>
        <strain>1448A / Race 6</strain>
    </source>
</reference>
<accession>Q48K34</accession>
<proteinExistence type="inferred from homology"/>
<dbReference type="EMBL" id="CP000058">
    <property type="protein sequence ID" value="AAZ35980.1"/>
    <property type="molecule type" value="Genomic_DNA"/>
</dbReference>
<dbReference type="RefSeq" id="WP_004664723.1">
    <property type="nucleotide sequence ID" value="NC_005773.3"/>
</dbReference>
<dbReference type="SMR" id="Q48K34"/>
<dbReference type="GeneID" id="61869432"/>
<dbReference type="KEGG" id="psp:PSPPH_2020"/>
<dbReference type="eggNOG" id="COG2156">
    <property type="taxonomic scope" value="Bacteria"/>
</dbReference>
<dbReference type="HOGENOM" id="CLU_077094_1_0_6"/>
<dbReference type="Proteomes" id="UP000000551">
    <property type="component" value="Chromosome"/>
</dbReference>
<dbReference type="GO" id="GO:0005886">
    <property type="term" value="C:plasma membrane"/>
    <property type="evidence" value="ECO:0007669"/>
    <property type="project" value="UniProtKB-SubCell"/>
</dbReference>
<dbReference type="GO" id="GO:0005524">
    <property type="term" value="F:ATP binding"/>
    <property type="evidence" value="ECO:0007669"/>
    <property type="project" value="UniProtKB-UniRule"/>
</dbReference>
<dbReference type="GO" id="GO:0008556">
    <property type="term" value="F:P-type potassium transmembrane transporter activity"/>
    <property type="evidence" value="ECO:0007669"/>
    <property type="project" value="InterPro"/>
</dbReference>
<dbReference type="HAMAP" id="MF_00276">
    <property type="entry name" value="KdpC"/>
    <property type="match status" value="1"/>
</dbReference>
<dbReference type="InterPro" id="IPR003820">
    <property type="entry name" value="KdpC"/>
</dbReference>
<dbReference type="NCBIfam" id="TIGR00681">
    <property type="entry name" value="kdpC"/>
    <property type="match status" value="1"/>
</dbReference>
<dbReference type="NCBIfam" id="NF001454">
    <property type="entry name" value="PRK00315.1"/>
    <property type="match status" value="1"/>
</dbReference>
<dbReference type="PANTHER" id="PTHR30042">
    <property type="entry name" value="POTASSIUM-TRANSPORTING ATPASE C CHAIN"/>
    <property type="match status" value="1"/>
</dbReference>
<dbReference type="PANTHER" id="PTHR30042:SF2">
    <property type="entry name" value="POTASSIUM-TRANSPORTING ATPASE KDPC SUBUNIT"/>
    <property type="match status" value="1"/>
</dbReference>
<dbReference type="Pfam" id="PF02669">
    <property type="entry name" value="KdpC"/>
    <property type="match status" value="1"/>
</dbReference>
<dbReference type="PIRSF" id="PIRSF001296">
    <property type="entry name" value="K_ATPase_KdpC"/>
    <property type="match status" value="1"/>
</dbReference>
<organism>
    <name type="scientific">Pseudomonas savastanoi pv. phaseolicola (strain 1448A / Race 6)</name>
    <name type="common">Pseudomonas syringae pv. phaseolicola (strain 1448A / Race 6)</name>
    <dbReference type="NCBI Taxonomy" id="264730"/>
    <lineage>
        <taxon>Bacteria</taxon>
        <taxon>Pseudomonadati</taxon>
        <taxon>Pseudomonadota</taxon>
        <taxon>Gammaproteobacteria</taxon>
        <taxon>Pseudomonadales</taxon>
        <taxon>Pseudomonadaceae</taxon>
        <taxon>Pseudomonas</taxon>
    </lineage>
</organism>
<sequence>MSNVLRPALSLIVLMSLITGVAYPLVVTGVAQVAFPAQANGSLVYDAAGKVRGSALIAQSFTGDEWFQSRPSAGAFATVASGASNFAPSNPALVTRVKEDVAKLANASQEPVPLALLTTSGSGLDPHLSPEAIAWQAGRVAAARQLPLEKVQALIDANTQRPLIGPPVVNVLALNMSLNQLPSAPRNAQL</sequence>
<gene>
    <name evidence="1" type="primary">kdpC</name>
    <name type="ordered locus">PSPPH_2020</name>
</gene>
<evidence type="ECO:0000255" key="1">
    <source>
        <dbReference type="HAMAP-Rule" id="MF_00276"/>
    </source>
</evidence>
<feature type="chain" id="PRO_1000022302" description="Potassium-transporting ATPase KdpC subunit">
    <location>
        <begin position="1"/>
        <end position="190"/>
    </location>
</feature>
<feature type="transmembrane region" description="Helical" evidence="1">
    <location>
        <begin position="11"/>
        <end position="31"/>
    </location>
</feature>
<keyword id="KW-0067">ATP-binding</keyword>
<keyword id="KW-0997">Cell inner membrane</keyword>
<keyword id="KW-1003">Cell membrane</keyword>
<keyword id="KW-0406">Ion transport</keyword>
<keyword id="KW-0472">Membrane</keyword>
<keyword id="KW-0547">Nucleotide-binding</keyword>
<keyword id="KW-0630">Potassium</keyword>
<keyword id="KW-0633">Potassium transport</keyword>
<keyword id="KW-0812">Transmembrane</keyword>
<keyword id="KW-1133">Transmembrane helix</keyword>
<keyword id="KW-0813">Transport</keyword>
<protein>
    <recommendedName>
        <fullName evidence="1">Potassium-transporting ATPase KdpC subunit</fullName>
    </recommendedName>
    <alternativeName>
        <fullName evidence="1">ATP phosphohydrolase [potassium-transporting] C chain</fullName>
    </alternativeName>
    <alternativeName>
        <fullName evidence="1">Potassium-binding and translocating subunit C</fullName>
    </alternativeName>
    <alternativeName>
        <fullName evidence="1">Potassium-translocating ATPase C chain</fullName>
    </alternativeName>
</protein>